<proteinExistence type="evidence at protein level"/>
<protein>
    <recommendedName>
        <fullName evidence="5 6">Heavy metal-associated isoprenylated plant protein 21</fullName>
        <shortName evidence="6">AtHIP21</shortName>
        <shortName evidence="5 6">AtHIPP21</shortName>
    </recommendedName>
</protein>
<organism>
    <name type="scientific">Arabidopsis thaliana</name>
    <name type="common">Mouse-ear cress</name>
    <dbReference type="NCBI Taxonomy" id="3702"/>
    <lineage>
        <taxon>Eukaryota</taxon>
        <taxon>Viridiplantae</taxon>
        <taxon>Streptophyta</taxon>
        <taxon>Embryophyta</taxon>
        <taxon>Tracheophyta</taxon>
        <taxon>Spermatophyta</taxon>
        <taxon>Magnoliopsida</taxon>
        <taxon>eudicotyledons</taxon>
        <taxon>Gunneridae</taxon>
        <taxon>Pentapetalae</taxon>
        <taxon>rosids</taxon>
        <taxon>malvids</taxon>
        <taxon>Brassicales</taxon>
        <taxon>Brassicaceae</taxon>
        <taxon>Camelineae</taxon>
        <taxon>Arabidopsis</taxon>
    </lineage>
</organism>
<keyword id="KW-0025">Alternative splicing</keyword>
<keyword id="KW-0104">Cadmium</keyword>
<keyword id="KW-0449">Lipoprotein</keyword>
<keyword id="KW-0472">Membrane</keyword>
<keyword id="KW-0479">Metal-binding</keyword>
<keyword id="KW-0488">Methylation</keyword>
<keyword id="KW-0636">Prenylation</keyword>
<keyword id="KW-1185">Reference proteome</keyword>
<feature type="chain" id="PRO_0000435857" description="Heavy metal-associated isoprenylated plant protein 21">
    <location>
        <begin position="1"/>
        <end position="146"/>
    </location>
</feature>
<feature type="propeptide" id="PRO_0000435858" description="Removed in mature form" evidence="7">
    <location>
        <begin position="147"/>
        <end position="149"/>
    </location>
</feature>
<feature type="domain" description="HMA" evidence="2">
    <location>
        <begin position="25"/>
        <end position="88"/>
    </location>
</feature>
<feature type="binding site" evidence="2">
    <location>
        <position position="36"/>
    </location>
    <ligand>
        <name>a metal cation</name>
        <dbReference type="ChEBI" id="CHEBI:25213"/>
    </ligand>
</feature>
<feature type="binding site" evidence="2">
    <location>
        <position position="39"/>
    </location>
    <ligand>
        <name>a metal cation</name>
        <dbReference type="ChEBI" id="CHEBI:25213"/>
    </ligand>
</feature>
<feature type="modified residue" description="Cysteine methyl ester" evidence="1">
    <location>
        <position position="146"/>
    </location>
</feature>
<feature type="lipid moiety-binding region" description="S-farnesyl cysteine" evidence="1">
    <location>
        <position position="146"/>
    </location>
</feature>
<reference key="1">
    <citation type="journal article" date="2000" name="Nature">
        <title>Sequence and analysis of chromosome 5 of the plant Arabidopsis thaliana.</title>
        <authorList>
            <person name="Tabata S."/>
            <person name="Kaneko T."/>
            <person name="Nakamura Y."/>
            <person name="Kotani H."/>
            <person name="Kato T."/>
            <person name="Asamizu E."/>
            <person name="Miyajima N."/>
            <person name="Sasamoto S."/>
            <person name="Kimura T."/>
            <person name="Hosouchi T."/>
            <person name="Kawashima K."/>
            <person name="Kohara M."/>
            <person name="Matsumoto M."/>
            <person name="Matsuno A."/>
            <person name="Muraki A."/>
            <person name="Nakayama S."/>
            <person name="Nakazaki N."/>
            <person name="Naruo K."/>
            <person name="Okumura S."/>
            <person name="Shinpo S."/>
            <person name="Takeuchi C."/>
            <person name="Wada T."/>
            <person name="Watanabe A."/>
            <person name="Yamada M."/>
            <person name="Yasuda M."/>
            <person name="Sato S."/>
            <person name="de la Bastide M."/>
            <person name="Huang E."/>
            <person name="Spiegel L."/>
            <person name="Gnoj L."/>
            <person name="O'Shaughnessy A."/>
            <person name="Preston R."/>
            <person name="Habermann K."/>
            <person name="Murray J."/>
            <person name="Johnson D."/>
            <person name="Rohlfing T."/>
            <person name="Nelson J."/>
            <person name="Stoneking T."/>
            <person name="Pepin K."/>
            <person name="Spieth J."/>
            <person name="Sekhon M."/>
            <person name="Armstrong J."/>
            <person name="Becker M."/>
            <person name="Belter E."/>
            <person name="Cordum H."/>
            <person name="Cordes M."/>
            <person name="Courtney L."/>
            <person name="Courtney W."/>
            <person name="Dante M."/>
            <person name="Du H."/>
            <person name="Edwards J."/>
            <person name="Fryman J."/>
            <person name="Haakensen B."/>
            <person name="Lamar E."/>
            <person name="Latreille P."/>
            <person name="Leonard S."/>
            <person name="Meyer R."/>
            <person name="Mulvaney E."/>
            <person name="Ozersky P."/>
            <person name="Riley A."/>
            <person name="Strowmatt C."/>
            <person name="Wagner-McPherson C."/>
            <person name="Wollam A."/>
            <person name="Yoakum M."/>
            <person name="Bell M."/>
            <person name="Dedhia N."/>
            <person name="Parnell L."/>
            <person name="Shah R."/>
            <person name="Rodriguez M."/>
            <person name="Hoon See L."/>
            <person name="Vil D."/>
            <person name="Baker J."/>
            <person name="Kirchoff K."/>
            <person name="Toth K."/>
            <person name="King L."/>
            <person name="Bahret A."/>
            <person name="Miller B."/>
            <person name="Marra M.A."/>
            <person name="Martienssen R."/>
            <person name="McCombie W.R."/>
            <person name="Wilson R.K."/>
            <person name="Murphy G."/>
            <person name="Bancroft I."/>
            <person name="Volckaert G."/>
            <person name="Wambutt R."/>
            <person name="Duesterhoeft A."/>
            <person name="Stiekema W."/>
            <person name="Pohl T."/>
            <person name="Entian K.-D."/>
            <person name="Terryn N."/>
            <person name="Hartley N."/>
            <person name="Bent E."/>
            <person name="Johnson S."/>
            <person name="Langham S.-A."/>
            <person name="McCullagh B."/>
            <person name="Robben J."/>
            <person name="Grymonprez B."/>
            <person name="Zimmermann W."/>
            <person name="Ramsperger U."/>
            <person name="Wedler H."/>
            <person name="Balke K."/>
            <person name="Wedler E."/>
            <person name="Peters S."/>
            <person name="van Staveren M."/>
            <person name="Dirkse W."/>
            <person name="Mooijman P."/>
            <person name="Klein Lankhorst R."/>
            <person name="Weitzenegger T."/>
            <person name="Bothe G."/>
            <person name="Rose M."/>
            <person name="Hauf J."/>
            <person name="Berneiser S."/>
            <person name="Hempel S."/>
            <person name="Feldpausch M."/>
            <person name="Lamberth S."/>
            <person name="Villarroel R."/>
            <person name="Gielen J."/>
            <person name="Ardiles W."/>
            <person name="Bents O."/>
            <person name="Lemcke K."/>
            <person name="Kolesov G."/>
            <person name="Mayer K.F.X."/>
            <person name="Rudd S."/>
            <person name="Schoof H."/>
            <person name="Schueller C."/>
            <person name="Zaccaria P."/>
            <person name="Mewes H.-W."/>
            <person name="Bevan M."/>
            <person name="Fransz P.F."/>
        </authorList>
    </citation>
    <scope>NUCLEOTIDE SEQUENCE [LARGE SCALE GENOMIC DNA]</scope>
    <source>
        <strain>cv. Columbia</strain>
    </source>
</reference>
<reference key="2">
    <citation type="journal article" date="2017" name="Plant J.">
        <title>Araport11: a complete reannotation of the Arabidopsis thaliana reference genome.</title>
        <authorList>
            <person name="Cheng C.Y."/>
            <person name="Krishnakumar V."/>
            <person name="Chan A.P."/>
            <person name="Thibaud-Nissen F."/>
            <person name="Schobel S."/>
            <person name="Town C.D."/>
        </authorList>
    </citation>
    <scope>GENOME REANNOTATION</scope>
    <source>
        <strain>cv. Columbia</strain>
    </source>
</reference>
<reference key="3">
    <citation type="submission" date="2006-11" db="EMBL/GenBank/DDBJ databases">
        <title>Arabidopsis ORF Clones.</title>
        <authorList>
            <person name="Bautista V.R."/>
            <person name="Kim C.J."/>
            <person name="Chen H."/>
            <person name="Quinitio C."/>
            <person name="Ecker J.R."/>
        </authorList>
    </citation>
    <scope>NUCLEOTIDE SEQUENCE [LARGE SCALE MRNA]</scope>
    <source>
        <strain>cv. Columbia</strain>
    </source>
</reference>
<reference key="4">
    <citation type="journal article" date="2009" name="Plant Mol. Biol.">
        <title>Stress induced and nuclear localized HIPP26 from Arabidopsis thaliana interacts via its heavy metal associated domain with the drought stress related zinc finger transcription factor ATHB29.</title>
        <authorList>
            <person name="Barth O."/>
            <person name="Vogt S."/>
            <person name="Uhlemann R."/>
            <person name="Zschiesche W."/>
            <person name="Humbeck K."/>
        </authorList>
    </citation>
    <scope>INTERACTION WITH ZHD11/HB29</scope>
    <source>
        <strain>cv. Columbia</strain>
    </source>
</reference>
<reference key="5">
    <citation type="journal article" date="2010" name="Metallomics">
        <title>Metallochaperone-like genes in Arabidopsis thaliana.</title>
        <authorList>
            <person name="Tehseen M."/>
            <person name="Cairns N."/>
            <person name="Sherson S."/>
            <person name="Cobbett C.S."/>
        </authorList>
    </citation>
    <scope>FUNCTION</scope>
    <scope>TISSUE SPECIFICITY</scope>
    <scope>NOMENCLATURE</scope>
    <scope>GENE FAMILY</scope>
    <scope>DISRUPTION PHENOTYPE</scope>
</reference>
<reference key="6">
    <citation type="journal article" date="2013" name="FEBS J.">
        <title>Heavy metal-associated isoprenylated plant protein (HIPP): characterization of a family of proteins exclusive to plants.</title>
        <authorList>
            <person name="de Abreu-Neto J.B."/>
            <person name="Turchetto-Zolet A.C."/>
            <person name="de Oliveira L.F."/>
            <person name="Zanettini M.H."/>
            <person name="Margis-Pinheiro M."/>
        </authorList>
    </citation>
    <scope>GENE FAMILY</scope>
    <scope>NOMENCLATURE</scope>
</reference>
<sequence length="149" mass="16996">MGAFDYISSFCSYTYANAKTKRKPLQTVDIKVKMDCDGCERRVRNVVRRMKGVKSVEVNRKQSRITVNGHVDPNKVLKRVKSTGKKAEFWPYIPQHMVYYPFAPGMYDKRAPAGHIRNPTQSFPTANAPEENYVSLFSDDNVHAACSIM</sequence>
<evidence type="ECO:0000250" key="1">
    <source>
        <dbReference type="UniProtKB" id="Q9SZN7"/>
    </source>
</evidence>
<evidence type="ECO:0000255" key="2">
    <source>
        <dbReference type="PROSITE-ProRule" id="PRU00280"/>
    </source>
</evidence>
<evidence type="ECO:0000269" key="3">
    <source>
    </source>
</evidence>
<evidence type="ECO:0000269" key="4">
    <source>
    </source>
</evidence>
<evidence type="ECO:0000303" key="5">
    <source>
    </source>
</evidence>
<evidence type="ECO:0000303" key="6">
    <source>
    </source>
</evidence>
<evidence type="ECO:0000305" key="7"/>
<evidence type="ECO:0000312" key="8">
    <source>
        <dbReference type="Araport" id="AT5G17450"/>
    </source>
</evidence>
<evidence type="ECO:0000312" key="9">
    <source>
        <dbReference type="EMBL" id="CAC01889.1"/>
    </source>
</evidence>
<gene>
    <name evidence="5 6" type="primary">HIPP21</name>
    <name evidence="8" type="ordered locus">At5g17450</name>
    <name evidence="9" type="ORF">K3M16_20</name>
</gene>
<comment type="function">
    <text evidence="4">Heavy-metal-binding protein. Binds cadmium. May be involved in cadmium transport and play a role in cadmium detoxification.</text>
</comment>
<comment type="subunit">
    <text evidence="3">Interacts with ZHD11/HB29.</text>
</comment>
<comment type="subcellular location">
    <subcellularLocation>
        <location evidence="1">Membrane</location>
    </subcellularLocation>
</comment>
<comment type="alternative products">
    <event type="alternative splicing"/>
    <isoform>
        <id>Q9LF57-1</id>
        <name>1</name>
        <sequence type="displayed"/>
    </isoform>
    <text evidence="7">A number of isoforms are produced. According to EST sequences.</text>
</comment>
<comment type="tissue specificity">
    <text evidence="4">Expressed at low levels in leaves and sepals.</text>
</comment>
<comment type="disruption phenotype">
    <text evidence="4">Hipp20, hipp21 and hipp22 triple mutants are cadmium sensitive.</text>
</comment>
<comment type="similarity">
    <text evidence="7">Belongs to the HIPP family.</text>
</comment>
<name>HIP21_ARATH</name>
<accession>Q9LF57</accession>
<dbReference type="EMBL" id="AL391150">
    <property type="protein sequence ID" value="CAC01889.1"/>
    <property type="molecule type" value="Genomic_DNA"/>
</dbReference>
<dbReference type="EMBL" id="CP002688">
    <property type="protein sequence ID" value="AED92427.1"/>
    <property type="molecule type" value="Genomic_DNA"/>
</dbReference>
<dbReference type="EMBL" id="BT029323">
    <property type="protein sequence ID" value="ABK32137.1"/>
    <property type="molecule type" value="mRNA"/>
</dbReference>
<dbReference type="PIR" id="T51471">
    <property type="entry name" value="T51471"/>
</dbReference>
<dbReference type="RefSeq" id="NP_197247.1">
    <molecule id="Q9LF57-1"/>
    <property type="nucleotide sequence ID" value="NM_121751.3"/>
</dbReference>
<dbReference type="SMR" id="Q9LF57"/>
<dbReference type="FunCoup" id="Q9LF57">
    <property type="interactions" value="52"/>
</dbReference>
<dbReference type="IntAct" id="Q9LF57">
    <property type="interactions" value="4"/>
</dbReference>
<dbReference type="STRING" id="3702.Q9LF57"/>
<dbReference type="PaxDb" id="3702-AT5G17450.1"/>
<dbReference type="EnsemblPlants" id="AT5G17450.1">
    <molecule id="Q9LF57-1"/>
    <property type="protein sequence ID" value="AT5G17450.1"/>
    <property type="gene ID" value="AT5G17450"/>
</dbReference>
<dbReference type="GeneID" id="831611"/>
<dbReference type="Gramene" id="AT5G17450.1">
    <molecule id="Q9LF57-1"/>
    <property type="protein sequence ID" value="AT5G17450.1"/>
    <property type="gene ID" value="AT5G17450"/>
</dbReference>
<dbReference type="KEGG" id="ath:AT5G17450"/>
<dbReference type="Araport" id="AT5G17450"/>
<dbReference type="TAIR" id="AT5G17450">
    <property type="gene designation" value="HIPP21"/>
</dbReference>
<dbReference type="eggNOG" id="KOG1603">
    <property type="taxonomic scope" value="Eukaryota"/>
</dbReference>
<dbReference type="HOGENOM" id="CLU_100095_1_0_1"/>
<dbReference type="InParanoid" id="Q9LF57"/>
<dbReference type="OMA" id="TRTKHKP"/>
<dbReference type="OrthoDB" id="689350at2759"/>
<dbReference type="PhylomeDB" id="Q9LF57"/>
<dbReference type="PRO" id="PR:Q9LF57"/>
<dbReference type="Proteomes" id="UP000006548">
    <property type="component" value="Chromosome 5"/>
</dbReference>
<dbReference type="ExpressionAtlas" id="Q9LF57">
    <property type="expression patterns" value="baseline and differential"/>
</dbReference>
<dbReference type="GO" id="GO:0016020">
    <property type="term" value="C:membrane"/>
    <property type="evidence" value="ECO:0007669"/>
    <property type="project" value="UniProtKB-SubCell"/>
</dbReference>
<dbReference type="GO" id="GO:0046872">
    <property type="term" value="F:metal ion binding"/>
    <property type="evidence" value="ECO:0007669"/>
    <property type="project" value="UniProtKB-KW"/>
</dbReference>
<dbReference type="GO" id="GO:0071585">
    <property type="term" value="P:detoxification of cadmium ion"/>
    <property type="evidence" value="ECO:0000315"/>
    <property type="project" value="UniProtKB"/>
</dbReference>
<dbReference type="CDD" id="cd00371">
    <property type="entry name" value="HMA"/>
    <property type="match status" value="1"/>
</dbReference>
<dbReference type="FunFam" id="3.30.70.100:FF:000035">
    <property type="entry name" value="Heavy metal-associated isoprenylated plant protein 26"/>
    <property type="match status" value="1"/>
</dbReference>
<dbReference type="Gene3D" id="3.30.70.100">
    <property type="match status" value="1"/>
</dbReference>
<dbReference type="InterPro" id="IPR006121">
    <property type="entry name" value="HMA_dom"/>
</dbReference>
<dbReference type="InterPro" id="IPR036163">
    <property type="entry name" value="HMA_dom_sf"/>
</dbReference>
<dbReference type="PANTHER" id="PTHR22814">
    <property type="entry name" value="COPPER TRANSPORT PROTEIN ATOX1-RELATED"/>
    <property type="match status" value="1"/>
</dbReference>
<dbReference type="PANTHER" id="PTHR22814:SF110">
    <property type="entry name" value="HEAVY METAL-ASSOCIATED ISOPRENYLATED PLANT PROTEIN 21"/>
    <property type="match status" value="1"/>
</dbReference>
<dbReference type="Pfam" id="PF00403">
    <property type="entry name" value="HMA"/>
    <property type="match status" value="1"/>
</dbReference>
<dbReference type="SUPFAM" id="SSF55008">
    <property type="entry name" value="HMA, heavy metal-associated domain"/>
    <property type="match status" value="1"/>
</dbReference>
<dbReference type="PROSITE" id="PS50846">
    <property type="entry name" value="HMA_2"/>
    <property type="match status" value="1"/>
</dbReference>